<protein>
    <recommendedName>
        <fullName evidence="4">Probable CCR4-Not complex 3'-5'-exoribonuclease subunit Ccr4</fullName>
        <ecNumber>3.1.13.4</ecNumber>
    </recommendedName>
    <alternativeName>
        <fullName>Carbon catabolite repressor protein 4</fullName>
    </alternativeName>
    <alternativeName>
        <fullName>Cytoplasmic deadenylase</fullName>
    </alternativeName>
    <alternativeName>
        <fullName>Glucose-repressible alcohol dehydrogenase transcriptional effector</fullName>
    </alternativeName>
</protein>
<dbReference type="EC" id="3.1.13.4"/>
<dbReference type="EMBL" id="ABGB01000044">
    <property type="protein sequence ID" value="EED43664.1"/>
    <property type="molecule type" value="Genomic_DNA"/>
</dbReference>
<dbReference type="RefSeq" id="XP_002650396.1">
    <property type="nucleotide sequence ID" value="XM_002650350.1"/>
</dbReference>
<dbReference type="SMR" id="B7XK66"/>
<dbReference type="STRING" id="481877.B7XK66"/>
<dbReference type="VEuPathDB" id="MicrosporidiaDB:EBI_22918"/>
<dbReference type="HOGENOM" id="CLU_016428_4_2_1"/>
<dbReference type="InParanoid" id="B7XK66"/>
<dbReference type="OMA" id="EHRMVAP"/>
<dbReference type="OrthoDB" id="428734at2759"/>
<dbReference type="GO" id="GO:0005737">
    <property type="term" value="C:cytoplasm"/>
    <property type="evidence" value="ECO:0007669"/>
    <property type="project" value="UniProtKB-SubCell"/>
</dbReference>
<dbReference type="GO" id="GO:0005634">
    <property type="term" value="C:nucleus"/>
    <property type="evidence" value="ECO:0007669"/>
    <property type="project" value="UniProtKB-SubCell"/>
</dbReference>
<dbReference type="GO" id="GO:0046872">
    <property type="term" value="F:metal ion binding"/>
    <property type="evidence" value="ECO:0007669"/>
    <property type="project" value="UniProtKB-KW"/>
</dbReference>
<dbReference type="GO" id="GO:0004535">
    <property type="term" value="F:poly(A)-specific ribonuclease activity"/>
    <property type="evidence" value="ECO:0007669"/>
    <property type="project" value="UniProtKB-EC"/>
</dbReference>
<dbReference type="GO" id="GO:0003723">
    <property type="term" value="F:RNA binding"/>
    <property type="evidence" value="ECO:0007669"/>
    <property type="project" value="UniProtKB-KW"/>
</dbReference>
<dbReference type="Gene3D" id="3.60.10.10">
    <property type="entry name" value="Endonuclease/exonuclease/phosphatase"/>
    <property type="match status" value="1"/>
</dbReference>
<dbReference type="Gene3D" id="3.80.10.10">
    <property type="entry name" value="Ribonuclease Inhibitor"/>
    <property type="match status" value="1"/>
</dbReference>
<dbReference type="InterPro" id="IPR050410">
    <property type="entry name" value="CCR4/nocturin_mRNA_transcr"/>
</dbReference>
<dbReference type="InterPro" id="IPR036691">
    <property type="entry name" value="Endo/exonu/phosph_ase_sf"/>
</dbReference>
<dbReference type="InterPro" id="IPR005135">
    <property type="entry name" value="Endo/exonuclease/phosphatase"/>
</dbReference>
<dbReference type="InterPro" id="IPR001611">
    <property type="entry name" value="Leu-rich_rpt"/>
</dbReference>
<dbReference type="InterPro" id="IPR003591">
    <property type="entry name" value="Leu-rich_rpt_typical-subtyp"/>
</dbReference>
<dbReference type="InterPro" id="IPR032675">
    <property type="entry name" value="LRR_dom_sf"/>
</dbReference>
<dbReference type="InterPro" id="IPR055414">
    <property type="entry name" value="LRR_R13L4/SHOC2-like"/>
</dbReference>
<dbReference type="PANTHER" id="PTHR12121">
    <property type="entry name" value="CARBON CATABOLITE REPRESSOR PROTEIN 4"/>
    <property type="match status" value="1"/>
</dbReference>
<dbReference type="PANTHER" id="PTHR12121:SF100">
    <property type="entry name" value="POLY(A)-SPECIFIC RIBONUCLEASE"/>
    <property type="match status" value="1"/>
</dbReference>
<dbReference type="Pfam" id="PF03372">
    <property type="entry name" value="Exo_endo_phos"/>
    <property type="match status" value="1"/>
</dbReference>
<dbReference type="Pfam" id="PF23598">
    <property type="entry name" value="LRR_14"/>
    <property type="match status" value="1"/>
</dbReference>
<dbReference type="SMART" id="SM00369">
    <property type="entry name" value="LRR_TYP"/>
    <property type="match status" value="3"/>
</dbReference>
<dbReference type="SUPFAM" id="SSF56219">
    <property type="entry name" value="DNase I-like"/>
    <property type="match status" value="1"/>
</dbReference>
<dbReference type="SUPFAM" id="SSF52075">
    <property type="entry name" value="Outer arm dynein light chain 1"/>
    <property type="match status" value="1"/>
</dbReference>
<dbReference type="PROSITE" id="PS51450">
    <property type="entry name" value="LRR"/>
    <property type="match status" value="4"/>
</dbReference>
<reference key="1">
    <citation type="journal article" date="2007" name="PLoS ONE">
        <title>Patterns of genome evolution among the microsporidian parasites Encephalitozoon cuniculi, Antonospora locustae and Enterocytozoon bieneusi.</title>
        <authorList>
            <person name="Corradi N."/>
            <person name="Akiyoshi D.E."/>
            <person name="Morrison H.G."/>
            <person name="Feng X."/>
            <person name="Weiss L.M."/>
            <person name="Tzipori S."/>
            <person name="Keeling P.J."/>
        </authorList>
    </citation>
    <scope>NUCLEOTIDE SEQUENCE [LARGE SCALE GENOMIC DNA]</scope>
    <source>
        <strain>H348</strain>
    </source>
</reference>
<reference key="2">
    <citation type="journal article" date="2009" name="PLoS Pathog.">
        <title>Genomic survey of the non-cultivatable opportunistic human pathogen, Enterocytozoon bieneusi.</title>
        <authorList>
            <person name="Akiyoshi D.E."/>
            <person name="Morrison H.G."/>
            <person name="Lei S."/>
            <person name="Feng X."/>
            <person name="Zhang Q."/>
            <person name="Corradi N."/>
            <person name="Mayanja H."/>
            <person name="Tumwine J.K."/>
            <person name="Keeling P.J."/>
            <person name="Weiss L.M."/>
            <person name="Tzipori S."/>
        </authorList>
    </citation>
    <scope>NUCLEOTIDE SEQUENCE [LARGE SCALE GENOMIC DNA]</scope>
    <source>
        <strain>H348</strain>
    </source>
</reference>
<feature type="chain" id="PRO_0000388440" description="Probable CCR4-Not complex 3'-5'-exoribonuclease subunit Ccr4">
    <location>
        <begin position="1"/>
        <end position="481"/>
    </location>
</feature>
<feature type="repeat" description="LRR 1">
    <location>
        <begin position="20"/>
        <end position="41"/>
    </location>
</feature>
<feature type="repeat" description="LRR 2">
    <location>
        <begin position="43"/>
        <end position="64"/>
    </location>
</feature>
<feature type="repeat" description="LRR 3">
    <location>
        <begin position="66"/>
        <end position="87"/>
    </location>
</feature>
<feature type="repeat" description="LRR 4">
    <location>
        <begin position="89"/>
        <end position="111"/>
    </location>
</feature>
<feature type="repeat" description="LRR 5">
    <location>
        <begin position="112"/>
        <end position="133"/>
    </location>
</feature>
<feature type="binding site" evidence="2">
    <location>
        <position position="218"/>
    </location>
    <ligand>
        <name>Mg(2+)</name>
        <dbReference type="ChEBI" id="CHEBI:18420"/>
    </ligand>
</feature>
<sequence length="481" mass="56348">MEEKIKKKDYNKDIDNCDDELEGLDMSFQGIKVIGKEITLLVSLKQLILNNNDIETIPEDISNLIRLEVLDFSYNKIEKIPTELGRLINLKELYLNNNMIVEVPMELGTLYKLENFSILNNPLVHPYGIMSKDKSLLRFCRENNTNYKQPNDRVWIDTVLKIDQSLETYSFGTFNILCSLYASNLTYAPSWVINLECRKDILMQTFIAYNLDILCLQEVDINVFNTFYKEQLAQKLDYDGVILPKKSFDKVTDQPKKFHGIVTFWKKNKFKLIEQVSIDFFQKIINDKRFKYLSDIHTRIFQKTNVGLITIFETCNTNIIIIVANVHLYWNPEFNDIKILQTIIYLEEIEFLKEKYKHAHIVLQGDFNSLQNSHVYQYIINRKLPTNIFDPWDYGSLNNGVTHSLTLRNAYDGHDITFTNFTPSFKAVIDYIFYSKYLNLISIISPIEDEYTKTTIGLPNIHFPSDHILIGAKFQFKSSKK</sequence>
<organism>
    <name type="scientific">Enterocytozoon bieneusi (strain H348)</name>
    <name type="common">Microsporidian parasite</name>
    <dbReference type="NCBI Taxonomy" id="481877"/>
    <lineage>
        <taxon>Eukaryota</taxon>
        <taxon>Fungi</taxon>
        <taxon>Fungi incertae sedis</taxon>
        <taxon>Microsporidia</taxon>
        <taxon>Enterocytozoonidae</taxon>
        <taxon>Enterocytozoon</taxon>
    </lineage>
</organism>
<name>CCR4_ENTBH</name>
<gene>
    <name type="primary">CCR4</name>
    <name type="ORF">EBI_22918</name>
</gene>
<comment type="function">
    <text evidence="3">Acts as a catalytic component of the CCR4-NOT core complex, which in the nucleus seems to be a general transcription factor, and in the cytoplasm the major mRNA deadenylase involved in mRNA turnover (By similarity). Ccr4 has 3'-5' RNase activity with a strong preference for polyadenylated substrates and also low exonuclease activity towards single-stranded DNA (By similarity).</text>
</comment>
<comment type="catalytic activity">
    <reaction>
        <text>Exonucleolytic cleavage of poly(A) to 5'-AMP.</text>
        <dbReference type="EC" id="3.1.13.4"/>
    </reaction>
</comment>
<comment type="cofactor">
    <cofactor evidence="1">
        <name>Mg(2+)</name>
        <dbReference type="ChEBI" id="CHEBI:18420"/>
    </cofactor>
</comment>
<comment type="subunit">
    <text evidence="1">Component of the CCR4-NOT core complex.</text>
</comment>
<comment type="subcellular location">
    <subcellularLocation>
        <location evidence="1">Cytoplasm</location>
    </subcellularLocation>
    <subcellularLocation>
        <location evidence="1">Nucleus</location>
    </subcellularLocation>
</comment>
<comment type="similarity">
    <text evidence="4">Belongs to the CCR4/nocturin family.</text>
</comment>
<evidence type="ECO:0000250" key="1"/>
<evidence type="ECO:0000250" key="2">
    <source>
        <dbReference type="UniProtKB" id="O95551"/>
    </source>
</evidence>
<evidence type="ECO:0000250" key="3">
    <source>
        <dbReference type="UniProtKB" id="P31384"/>
    </source>
</evidence>
<evidence type="ECO:0000305" key="4"/>
<accession>B7XK66</accession>
<keyword id="KW-0010">Activator</keyword>
<keyword id="KW-0963">Cytoplasm</keyword>
<keyword id="KW-0269">Exonuclease</keyword>
<keyword id="KW-0378">Hydrolase</keyword>
<keyword id="KW-0433">Leucine-rich repeat</keyword>
<keyword id="KW-0460">Magnesium</keyword>
<keyword id="KW-0479">Metal-binding</keyword>
<keyword id="KW-0540">Nuclease</keyword>
<keyword id="KW-0539">Nucleus</keyword>
<keyword id="KW-0677">Repeat</keyword>
<keyword id="KW-0678">Repressor</keyword>
<keyword id="KW-0694">RNA-binding</keyword>
<keyword id="KW-0804">Transcription</keyword>
<keyword id="KW-0805">Transcription regulation</keyword>
<proteinExistence type="inferred from homology"/>